<gene>
    <name evidence="6" type="ORF">CBW46_002070</name>
</gene>
<dbReference type="EMBL" id="NHRJ02000001">
    <property type="protein sequence ID" value="PZE22587.1"/>
    <property type="molecule type" value="Genomic_DNA"/>
</dbReference>
<dbReference type="RefSeq" id="WP_089198357.1">
    <property type="nucleotide sequence ID" value="NZ_NHRJ02000001.1"/>
</dbReference>
<dbReference type="PDB" id="7U2S">
    <property type="method" value="X-ray"/>
    <property type="resolution" value="1.55 A"/>
    <property type="chains" value="A/B=2-250"/>
</dbReference>
<dbReference type="PDBsum" id="7U2S"/>
<dbReference type="SMR" id="A0A2W1NDJ7"/>
<dbReference type="OrthoDB" id="9803916at2"/>
<dbReference type="Proteomes" id="UP000214746">
    <property type="component" value="Unassembled WGS sequence"/>
</dbReference>
<dbReference type="GO" id="GO:0016787">
    <property type="term" value="F:hydrolase activity"/>
    <property type="evidence" value="ECO:0007669"/>
    <property type="project" value="UniProtKB-KW"/>
</dbReference>
<dbReference type="GO" id="GO:0046872">
    <property type="term" value="F:metal ion binding"/>
    <property type="evidence" value="ECO:0007669"/>
    <property type="project" value="UniProtKB-KW"/>
</dbReference>
<dbReference type="Gene3D" id="3.60.15.10">
    <property type="entry name" value="Ribonuclease Z/Hydroxyacylglutathione hydrolase-like"/>
    <property type="match status" value="1"/>
</dbReference>
<dbReference type="InterPro" id="IPR056308">
    <property type="entry name" value="Anti-Pycsar_Apyc1"/>
</dbReference>
<dbReference type="InterPro" id="IPR001279">
    <property type="entry name" value="Metallo-B-lactamas"/>
</dbReference>
<dbReference type="InterPro" id="IPR036866">
    <property type="entry name" value="RibonucZ/Hydroxyglut_hydro"/>
</dbReference>
<dbReference type="PANTHER" id="PTHR42663:SF6">
    <property type="entry name" value="HYDROLASE C777.06C-RELATED"/>
    <property type="match status" value="1"/>
</dbReference>
<dbReference type="PANTHER" id="PTHR42663">
    <property type="entry name" value="HYDROLASE C777.06C-RELATED-RELATED"/>
    <property type="match status" value="1"/>
</dbReference>
<dbReference type="Pfam" id="PF23023">
    <property type="entry name" value="Anti-Pycsar_Apyc1"/>
    <property type="match status" value="1"/>
</dbReference>
<dbReference type="SMART" id="SM00849">
    <property type="entry name" value="Lactamase_B"/>
    <property type="match status" value="1"/>
</dbReference>
<dbReference type="SUPFAM" id="SSF56281">
    <property type="entry name" value="Metallo-hydrolase/oxidoreductase"/>
    <property type="match status" value="1"/>
</dbReference>
<keyword id="KW-0002">3D-structure</keyword>
<keyword id="KW-0378">Hydrolase</keyword>
<keyword id="KW-0479">Metal-binding</keyword>
<keyword id="KW-1185">Reference proteome</keyword>
<keyword id="KW-0862">Zinc</keyword>
<reference key="1">
    <citation type="submission" date="2018-06" db="EMBL/GenBank/DDBJ databases">
        <title>Paenibacillus xerothermodurans sp. nov. an extremely dry heat resistant spore forming bacterium isolated from the soil of Cape Canaveral, Florida.</title>
        <authorList>
            <person name="Seuylemezian A."/>
            <person name="Kaur N."/>
            <person name="Patil P."/>
            <person name="Patil P."/>
            <person name="Mayilraj S."/>
            <person name="Vaishampayan P."/>
        </authorList>
    </citation>
    <scope>NUCLEOTIDE SEQUENCE [LARGE SCALE GENOMIC DNA]</scope>
    <source>
        <strain evidence="5">ATCC 27380 / DSM 520 / CCUG 10978 / NRRL NRS-1629</strain>
    </source>
</reference>
<reference evidence="7" key="2">
    <citation type="journal article" date="2022" name="Nature">
        <title>Phage anti-CBASS and anti-Pycsar nucleases subvert bacterial immunity.</title>
        <authorList>
            <person name="Hobbs S.J."/>
            <person name="Wein T."/>
            <person name="Lu A."/>
            <person name="Morehouse B.R."/>
            <person name="Schnabel J."/>
            <person name="Leavitt A."/>
            <person name="Yirmiya E."/>
            <person name="Sorek R."/>
            <person name="Kranzusch P.J."/>
        </authorList>
    </citation>
    <scope>X-RAY CRYSTALLOGRAPHY (1.55 ANGSTROMS) OF 2-250 IN COMPLEX WITH ZINC</scope>
    <scope>FUNCTION</scope>
    <scope>CATALYTIC ACTIVITY</scope>
    <source>
        <strain evidence="5">ATCC 27380 / DSM 520 / CCUG 10978 / NRRL NRS-1629</strain>
    </source>
</reference>
<sequence length="250" mass="27834">MSLQIQMIGTGSAFAKKFYNNNALVKCNGFQLLIDCGVTAPRALHELGVPITGIDGILITHIHADHVGGIEEFAFRLKYKYGMTIKLFVPAALVNPLWDHSLRGGLENKAEGLEQLADYFDVVALEEAVVHEIHPGLTVELVRSQHIAGKASYSLLLNNLLFYSSDARFNYAQLVELSTSGRCKYILHDCQLAEPAAVHATLNELLTLPEAVQEMIMLMHYDDEMEQFIGKSGKMSFMQQHKTYSFTEAT</sequence>
<proteinExistence type="evidence at protein level"/>
<comment type="function">
    <text evidence="3">Counteracts the endogenous Pycsar antiviral defense system. Phosphodiesterase that enables metal-dependent hydrolysis of host cyclic nucleotide Pycsar defense signals such as cCMP and cUMP.</text>
</comment>
<comment type="catalytic activity">
    <reaction evidence="3">
        <text>3',5'-cyclic CMP + H2O = CMP + H(+)</text>
        <dbReference type="Rhea" id="RHEA:72675"/>
        <dbReference type="ChEBI" id="CHEBI:15377"/>
        <dbReference type="ChEBI" id="CHEBI:15378"/>
        <dbReference type="ChEBI" id="CHEBI:58003"/>
        <dbReference type="ChEBI" id="CHEBI:60377"/>
    </reaction>
    <physiologicalReaction direction="left-to-right" evidence="3">
        <dbReference type="Rhea" id="RHEA:72676"/>
    </physiologicalReaction>
</comment>
<comment type="catalytic activity">
    <reaction evidence="3">
        <text>3',5'-cyclic UMP + H2O = UMP + H(+)</text>
        <dbReference type="Rhea" id="RHEA:70575"/>
        <dbReference type="ChEBI" id="CHEBI:15377"/>
        <dbReference type="ChEBI" id="CHEBI:15378"/>
        <dbReference type="ChEBI" id="CHEBI:57865"/>
        <dbReference type="ChEBI" id="CHEBI:184387"/>
    </reaction>
    <physiologicalReaction direction="left-to-right" evidence="3">
        <dbReference type="Rhea" id="RHEA:70576"/>
    </physiologicalReaction>
</comment>
<comment type="cofactor">
    <cofactor evidence="1">
        <name>Zn(2+)</name>
        <dbReference type="ChEBI" id="CHEBI:29105"/>
    </cofactor>
    <text evidence="1">Coordinates 2 Zn(2+) ions. One protomer coordinates the metal ions and the opposing protomer provides the catalytic residues required for cCMP hydrolysis.</text>
</comment>
<comment type="subunit">
    <text evidence="2">Homodimer.</text>
</comment>
<comment type="miscellaneous">
    <text evidence="3">This homolog of an antiviral immune evasion nuclease may be due to cryptic prophages, or it may play a role in regulating the endogenous antiviral defense system based on cyclic nucleotides.</text>
</comment>
<comment type="similarity">
    <text evidence="5">Belongs to the anti-Pycsar protein Apyc1 family.</text>
</comment>
<evidence type="ECO:0000250" key="1">
    <source>
        <dbReference type="UniProtKB" id="A0A345MJY6"/>
    </source>
</evidence>
<evidence type="ECO:0000250" key="2">
    <source>
        <dbReference type="UniProtKB" id="P0DTL1"/>
    </source>
</evidence>
<evidence type="ECO:0000269" key="3">
    <source>
    </source>
</evidence>
<evidence type="ECO:0000303" key="4">
    <source>
    </source>
</evidence>
<evidence type="ECO:0000305" key="5"/>
<evidence type="ECO:0000312" key="6">
    <source>
        <dbReference type="EMBL" id="PZE22587.1"/>
    </source>
</evidence>
<evidence type="ECO:0007744" key="7">
    <source>
        <dbReference type="PDB" id="7U2S"/>
    </source>
</evidence>
<evidence type="ECO:0007829" key="8">
    <source>
        <dbReference type="PDB" id="7U2S"/>
    </source>
</evidence>
<name>APYC1_PAEXE</name>
<accession>A0A2W1NDJ7</accession>
<feature type="chain" id="PRO_0000456672" description="Anti-Pycsar protein Apyc1">
    <location>
        <begin position="1"/>
        <end position="250"/>
    </location>
</feature>
<feature type="region of interest" description="Beta-lactamase-like" evidence="1">
    <location>
        <begin position="19"/>
        <end position="220"/>
    </location>
</feature>
<feature type="binding site" evidence="3">
    <location>
        <position position="61"/>
    </location>
    <ligand>
        <name>Zn(2+)</name>
        <dbReference type="ChEBI" id="CHEBI:29105"/>
        <label>2</label>
    </ligand>
</feature>
<feature type="binding site" evidence="3">
    <location>
        <position position="63"/>
    </location>
    <ligand>
        <name>Zn(2+)</name>
        <dbReference type="ChEBI" id="CHEBI:29105"/>
        <label>2</label>
    </ligand>
</feature>
<feature type="binding site" evidence="2">
    <location>
        <position position="65"/>
    </location>
    <ligand>
        <name>Zn(2+)</name>
        <dbReference type="ChEBI" id="CHEBI:29105"/>
        <label>1</label>
    </ligand>
</feature>
<feature type="binding site" evidence="2">
    <location>
        <position position="66"/>
    </location>
    <ligand>
        <name>Zn(2+)</name>
        <dbReference type="ChEBI" id="CHEBI:29105"/>
        <label>1</label>
    </ligand>
</feature>
<feature type="binding site" evidence="3">
    <location>
        <position position="146"/>
    </location>
    <ligand>
        <name>Zn(2+)</name>
        <dbReference type="ChEBI" id="CHEBI:29105"/>
        <label>2</label>
    </ligand>
</feature>
<feature type="binding site" evidence="3">
    <location>
        <position position="166"/>
    </location>
    <ligand>
        <name>Zn(2+)</name>
        <dbReference type="ChEBI" id="CHEBI:29105"/>
        <label>1</label>
    </ligand>
</feature>
<feature type="binding site" evidence="2">
    <location>
        <position position="220"/>
    </location>
    <ligand>
        <name>Zn(2+)</name>
        <dbReference type="ChEBI" id="CHEBI:29105"/>
        <label>1</label>
    </ligand>
</feature>
<feature type="strand" evidence="8">
    <location>
        <begin position="3"/>
        <end position="9"/>
    </location>
</feature>
<feature type="strand" evidence="8">
    <location>
        <begin position="16"/>
        <end position="18"/>
    </location>
</feature>
<feature type="strand" evidence="8">
    <location>
        <begin position="22"/>
        <end position="27"/>
    </location>
</feature>
<feature type="strand" evidence="8">
    <location>
        <begin position="30"/>
        <end position="34"/>
    </location>
</feature>
<feature type="helix" evidence="8">
    <location>
        <begin position="40"/>
        <end position="47"/>
    </location>
</feature>
<feature type="helix" evidence="8">
    <location>
        <begin position="51"/>
        <end position="53"/>
    </location>
</feature>
<feature type="strand" evidence="8">
    <location>
        <begin position="56"/>
        <end position="58"/>
    </location>
</feature>
<feature type="helix" evidence="8">
    <location>
        <begin position="64"/>
        <end position="67"/>
    </location>
</feature>
<feature type="helix" evidence="8">
    <location>
        <begin position="70"/>
        <end position="79"/>
    </location>
</feature>
<feature type="strand" evidence="8">
    <location>
        <begin position="86"/>
        <end position="90"/>
    </location>
</feature>
<feature type="helix" evidence="8">
    <location>
        <begin position="91"/>
        <end position="93"/>
    </location>
</feature>
<feature type="helix" evidence="8">
    <location>
        <begin position="94"/>
        <end position="99"/>
    </location>
</feature>
<feature type="turn" evidence="8">
    <location>
        <begin position="100"/>
        <end position="102"/>
    </location>
</feature>
<feature type="helix" evidence="8">
    <location>
        <begin position="103"/>
        <end position="106"/>
    </location>
</feature>
<feature type="helix" evidence="8">
    <location>
        <begin position="109"/>
        <end position="111"/>
    </location>
</feature>
<feature type="helix" evidence="8">
    <location>
        <begin position="116"/>
        <end position="118"/>
    </location>
</feature>
<feature type="strand" evidence="8">
    <location>
        <begin position="120"/>
        <end position="125"/>
    </location>
</feature>
<feature type="strand" evidence="8">
    <location>
        <begin position="129"/>
        <end position="134"/>
    </location>
</feature>
<feature type="strand" evidence="8">
    <location>
        <begin position="137"/>
        <end position="143"/>
    </location>
</feature>
<feature type="strand" evidence="8">
    <location>
        <begin position="153"/>
        <end position="157"/>
    </location>
</feature>
<feature type="turn" evidence="8">
    <location>
        <begin position="158"/>
        <end position="160"/>
    </location>
</feature>
<feature type="strand" evidence="8">
    <location>
        <begin position="161"/>
        <end position="163"/>
    </location>
</feature>
<feature type="helix" evidence="8">
    <location>
        <begin position="171"/>
        <end position="180"/>
    </location>
</feature>
<feature type="strand" evidence="8">
    <location>
        <begin position="184"/>
        <end position="189"/>
    </location>
</feature>
<feature type="strand" evidence="8">
    <location>
        <begin position="193"/>
        <end position="195"/>
    </location>
</feature>
<feature type="strand" evidence="8">
    <location>
        <begin position="197"/>
        <end position="199"/>
    </location>
</feature>
<feature type="helix" evidence="8">
    <location>
        <begin position="202"/>
        <end position="205"/>
    </location>
</feature>
<feature type="helix" evidence="8">
    <location>
        <begin position="210"/>
        <end position="213"/>
    </location>
</feature>
<feature type="strand" evidence="8">
    <location>
        <begin position="216"/>
        <end position="221"/>
    </location>
</feature>
<feature type="helix" evidence="8">
    <location>
        <begin position="223"/>
        <end position="228"/>
    </location>
</feature>
<feature type="strand" evidence="8">
    <location>
        <begin position="243"/>
        <end position="246"/>
    </location>
</feature>
<protein>
    <recommendedName>
        <fullName evidence="4">Anti-Pycsar protein Apyc1</fullName>
        <shortName evidence="4">Apyc1</shortName>
    </recommendedName>
</protein>
<organism>
    <name type="scientific">Paenibacillus xerothermodurans</name>
    <dbReference type="NCBI Taxonomy" id="1977292"/>
    <lineage>
        <taxon>Bacteria</taxon>
        <taxon>Bacillati</taxon>
        <taxon>Bacillota</taxon>
        <taxon>Bacilli</taxon>
        <taxon>Bacillales</taxon>
        <taxon>Paenibacillaceae</taxon>
        <taxon>Paenibacillus</taxon>
    </lineage>
</organism>